<name>DNAK3_SYNP6</name>
<keyword id="KW-0067">ATP-binding</keyword>
<keyword id="KW-0143">Chaperone</keyword>
<keyword id="KW-0547">Nucleotide-binding</keyword>
<keyword id="KW-0597">Phosphoprotein</keyword>
<keyword id="KW-0346">Stress response</keyword>
<proteinExistence type="inferred from homology"/>
<organism>
    <name type="scientific">Synechococcus sp. (strain ATCC 27144 / PCC 6301 / SAUG 1402/1)</name>
    <name type="common">Anacystis nidulans</name>
    <dbReference type="NCBI Taxonomy" id="269084"/>
    <lineage>
        <taxon>Bacteria</taxon>
        <taxon>Bacillati</taxon>
        <taxon>Cyanobacteriota</taxon>
        <taxon>Cyanophyceae</taxon>
        <taxon>Synechococcales</taxon>
        <taxon>Synechococcaceae</taxon>
        <taxon>Synechococcus</taxon>
    </lineage>
</organism>
<sequence>MGKVIGIDLGTTNSCVAVLEGGKPIIVTNREGDRTTPSIVAVGRKGDRIVGRMAKRQAVTNAENTVYSIKRFIGRRWEDTEAERSRVTYTCVPGKDDTVNVTIRDRVCTPQEISAMVLQKLRQDAETFLGEPVTQAVITVPAYFTDAQRQATKDAGAIAGLKVLRIVNEPTAAALSYGLDKLHENSRILVFDLGGGTLDVSILQLGDSVFEVKATAGNNHLGGDDFDAVIVDWLADNFLKAESIDLRQDKMAIQRLREASEQAKIDLSTLPTTTINLPFIATATVDGAPEPKHIEVELQREQFEVLASNLVQATIEPIQQALKDSNLTIDQIDRILLVGGSSRIPAIQQAVQKFFGGKTPDLTINPDEAIALGAAIQAGVLGGEVKDVLLLDVIPLSLGLETLGGVFTKIIERNTTIPTSRTQVFTTATDGQVMVEVHVLQGERALVKDNKSLGRFQLTGIPPAPRGVPQIELAFDIDADGILNVSARDRGTGRAQGIRITSTGGLTSDEIEAMRRDAELYQEADQINLQMIELRTQFENLRYSFESTLQNNRELLTAEQQEPLEASLNALASGLESVSNEAELNQLRQQLEALKQQLYAIGAAAYRQDGSVTTIPVQPTFADLIGDNDNGSNETVAIERNDDDATVTADYEAIE</sequence>
<feature type="chain" id="PRO_0000226020" description="Chaperone protein DnaK 3">
    <location>
        <begin position="1"/>
        <end position="655"/>
    </location>
</feature>
<feature type="modified residue" description="Phosphothreonine; by autocatalysis" evidence="1">
    <location>
        <position position="197"/>
    </location>
</feature>
<gene>
    <name evidence="1" type="primary">dnaK3</name>
    <name type="ordered locus">syc2020_c</name>
</gene>
<dbReference type="EMBL" id="AP008231">
    <property type="protein sequence ID" value="BAD80210.1"/>
    <property type="molecule type" value="Genomic_DNA"/>
</dbReference>
<dbReference type="RefSeq" id="WP_011244330.1">
    <property type="nucleotide sequence ID" value="NC_006576.1"/>
</dbReference>
<dbReference type="SMR" id="Q5N0G0"/>
<dbReference type="KEGG" id="syc:syc2020_c"/>
<dbReference type="eggNOG" id="COG0443">
    <property type="taxonomic scope" value="Bacteria"/>
</dbReference>
<dbReference type="Proteomes" id="UP000001175">
    <property type="component" value="Chromosome"/>
</dbReference>
<dbReference type="GO" id="GO:0005524">
    <property type="term" value="F:ATP binding"/>
    <property type="evidence" value="ECO:0007669"/>
    <property type="project" value="UniProtKB-UniRule"/>
</dbReference>
<dbReference type="GO" id="GO:0140662">
    <property type="term" value="F:ATP-dependent protein folding chaperone"/>
    <property type="evidence" value="ECO:0007669"/>
    <property type="project" value="InterPro"/>
</dbReference>
<dbReference type="GO" id="GO:0051082">
    <property type="term" value="F:unfolded protein binding"/>
    <property type="evidence" value="ECO:0007669"/>
    <property type="project" value="InterPro"/>
</dbReference>
<dbReference type="CDD" id="cd10234">
    <property type="entry name" value="ASKHA_NBD_HSP70_DnaK-like"/>
    <property type="match status" value="1"/>
</dbReference>
<dbReference type="FunFam" id="2.60.34.10:FF:000014">
    <property type="entry name" value="Chaperone protein DnaK HSP70"/>
    <property type="match status" value="1"/>
</dbReference>
<dbReference type="FunFam" id="3.30.420.40:FF:000004">
    <property type="entry name" value="Molecular chaperone DnaK"/>
    <property type="match status" value="1"/>
</dbReference>
<dbReference type="FunFam" id="3.90.640.10:FF:000003">
    <property type="entry name" value="Molecular chaperone DnaK"/>
    <property type="match status" value="1"/>
</dbReference>
<dbReference type="Gene3D" id="3.30.420.40">
    <property type="match status" value="2"/>
</dbReference>
<dbReference type="Gene3D" id="3.90.640.10">
    <property type="entry name" value="Actin, Chain A, domain 4"/>
    <property type="match status" value="1"/>
</dbReference>
<dbReference type="Gene3D" id="2.60.34.10">
    <property type="entry name" value="Substrate Binding Domain Of DNAk, Chain A, domain 1"/>
    <property type="match status" value="1"/>
</dbReference>
<dbReference type="HAMAP" id="MF_00332">
    <property type="entry name" value="DnaK"/>
    <property type="match status" value="1"/>
</dbReference>
<dbReference type="InterPro" id="IPR043129">
    <property type="entry name" value="ATPase_NBD"/>
</dbReference>
<dbReference type="InterPro" id="IPR012725">
    <property type="entry name" value="Chaperone_DnaK"/>
</dbReference>
<dbReference type="InterPro" id="IPR018181">
    <property type="entry name" value="Heat_shock_70_CS"/>
</dbReference>
<dbReference type="InterPro" id="IPR029047">
    <property type="entry name" value="HSP70_peptide-bd_sf"/>
</dbReference>
<dbReference type="InterPro" id="IPR013126">
    <property type="entry name" value="Hsp_70_fam"/>
</dbReference>
<dbReference type="NCBIfam" id="NF001413">
    <property type="entry name" value="PRK00290.1"/>
    <property type="match status" value="1"/>
</dbReference>
<dbReference type="NCBIfam" id="NF009947">
    <property type="entry name" value="PRK13411.1"/>
    <property type="match status" value="1"/>
</dbReference>
<dbReference type="NCBIfam" id="TIGR02350">
    <property type="entry name" value="prok_dnaK"/>
    <property type="match status" value="1"/>
</dbReference>
<dbReference type="PANTHER" id="PTHR19375">
    <property type="entry name" value="HEAT SHOCK PROTEIN 70KDA"/>
    <property type="match status" value="1"/>
</dbReference>
<dbReference type="Pfam" id="PF00012">
    <property type="entry name" value="HSP70"/>
    <property type="match status" value="1"/>
</dbReference>
<dbReference type="PRINTS" id="PR00301">
    <property type="entry name" value="HEATSHOCK70"/>
</dbReference>
<dbReference type="SUPFAM" id="SSF53067">
    <property type="entry name" value="Actin-like ATPase domain"/>
    <property type="match status" value="2"/>
</dbReference>
<dbReference type="SUPFAM" id="SSF100920">
    <property type="entry name" value="Heat shock protein 70kD (HSP70), peptide-binding domain"/>
    <property type="match status" value="1"/>
</dbReference>
<dbReference type="PROSITE" id="PS00297">
    <property type="entry name" value="HSP70_1"/>
    <property type="match status" value="1"/>
</dbReference>
<dbReference type="PROSITE" id="PS00329">
    <property type="entry name" value="HSP70_2"/>
    <property type="match status" value="1"/>
</dbReference>
<dbReference type="PROSITE" id="PS01036">
    <property type="entry name" value="HSP70_3"/>
    <property type="match status" value="1"/>
</dbReference>
<reference key="1">
    <citation type="journal article" date="2007" name="Photosyn. Res.">
        <title>Complete nucleotide sequence of the freshwater unicellular cyanobacterium Synechococcus elongatus PCC 6301 chromosome: gene content and organization.</title>
        <authorList>
            <person name="Sugita C."/>
            <person name="Ogata K."/>
            <person name="Shikata M."/>
            <person name="Jikuya H."/>
            <person name="Takano J."/>
            <person name="Furumichi M."/>
            <person name="Kanehisa M."/>
            <person name="Omata T."/>
            <person name="Sugiura M."/>
            <person name="Sugita M."/>
        </authorList>
    </citation>
    <scope>NUCLEOTIDE SEQUENCE [LARGE SCALE GENOMIC DNA]</scope>
    <source>
        <strain>ATCC 27144 / PCC 6301 / SAUG 1402/1</strain>
    </source>
</reference>
<comment type="function">
    <text evidence="1">Acts as a chaperone.</text>
</comment>
<comment type="induction">
    <text evidence="1">By stress conditions e.g. heat shock.</text>
</comment>
<comment type="similarity">
    <text evidence="1">Belongs to the heat shock protein 70 family.</text>
</comment>
<protein>
    <recommendedName>
        <fullName evidence="1">Chaperone protein DnaK 3</fullName>
    </recommendedName>
    <alternativeName>
        <fullName evidence="1">HSP70 3</fullName>
    </alternativeName>
    <alternativeName>
        <fullName evidence="1">Heat shock 70 kDa protein 3</fullName>
    </alternativeName>
    <alternativeName>
        <fullName evidence="1">Heat shock protein 70 3</fullName>
    </alternativeName>
</protein>
<evidence type="ECO:0000255" key="1">
    <source>
        <dbReference type="HAMAP-Rule" id="MF_00332"/>
    </source>
</evidence>
<accession>Q5N0G0</accession>